<sequence>MSHLLTMSELSEVEISEILKDAEDFANGKESKTTEQTFVANLFFENSTRTRFSFEVAEKRLGLDVLNFSADASSVQKGETLYDTIRTLESIGTKAVVIRHEQDRYFDELKDQVNIPILNAGDGCGNHPTQCLLDLLTIKQEFGRFEGLKIAIVGDVRHSRVARSNAEALTKLGATIYFASPEEWKDEDNTFGTYKPLDELVPEVDVMMLLRVQHERHDHYETDIMKEYHEKHGLTVEREKRMKEGSIIMHPAPVNRDVEIASELVECERSRIFKQMENGVYVRMAVLKRALPNVLGGMKHELFV</sequence>
<organism>
    <name type="scientific">Bacillus cereus (strain AH187)</name>
    <dbReference type="NCBI Taxonomy" id="405534"/>
    <lineage>
        <taxon>Bacteria</taxon>
        <taxon>Bacillati</taxon>
        <taxon>Bacillota</taxon>
        <taxon>Bacilli</taxon>
        <taxon>Bacillales</taxon>
        <taxon>Bacillaceae</taxon>
        <taxon>Bacillus</taxon>
        <taxon>Bacillus cereus group</taxon>
    </lineage>
</organism>
<accession>B7HLM3</accession>
<evidence type="ECO:0000255" key="1">
    <source>
        <dbReference type="HAMAP-Rule" id="MF_00001"/>
    </source>
</evidence>
<feature type="chain" id="PRO_1000191899" description="Aspartate carbamoyltransferase catalytic subunit">
    <location>
        <begin position="1"/>
        <end position="304"/>
    </location>
</feature>
<feature type="binding site" evidence="1">
    <location>
        <position position="49"/>
    </location>
    <ligand>
        <name>carbamoyl phosphate</name>
        <dbReference type="ChEBI" id="CHEBI:58228"/>
    </ligand>
</feature>
<feature type="binding site" evidence="1">
    <location>
        <position position="50"/>
    </location>
    <ligand>
        <name>carbamoyl phosphate</name>
        <dbReference type="ChEBI" id="CHEBI:58228"/>
    </ligand>
</feature>
<feature type="binding site" evidence="1">
    <location>
        <position position="77"/>
    </location>
    <ligand>
        <name>L-aspartate</name>
        <dbReference type="ChEBI" id="CHEBI:29991"/>
    </ligand>
</feature>
<feature type="binding site" evidence="1">
    <location>
        <position position="99"/>
    </location>
    <ligand>
        <name>carbamoyl phosphate</name>
        <dbReference type="ChEBI" id="CHEBI:58228"/>
    </ligand>
</feature>
<feature type="binding site" evidence="1">
    <location>
        <position position="127"/>
    </location>
    <ligand>
        <name>carbamoyl phosphate</name>
        <dbReference type="ChEBI" id="CHEBI:58228"/>
    </ligand>
</feature>
<feature type="binding site" evidence="1">
    <location>
        <position position="130"/>
    </location>
    <ligand>
        <name>carbamoyl phosphate</name>
        <dbReference type="ChEBI" id="CHEBI:58228"/>
    </ligand>
</feature>
<feature type="binding site" evidence="1">
    <location>
        <position position="160"/>
    </location>
    <ligand>
        <name>L-aspartate</name>
        <dbReference type="ChEBI" id="CHEBI:29991"/>
    </ligand>
</feature>
<feature type="binding site" evidence="1">
    <location>
        <position position="211"/>
    </location>
    <ligand>
        <name>L-aspartate</name>
        <dbReference type="ChEBI" id="CHEBI:29991"/>
    </ligand>
</feature>
<feature type="binding site" evidence="1">
    <location>
        <position position="252"/>
    </location>
    <ligand>
        <name>carbamoyl phosphate</name>
        <dbReference type="ChEBI" id="CHEBI:58228"/>
    </ligand>
</feature>
<feature type="binding site" evidence="1">
    <location>
        <position position="253"/>
    </location>
    <ligand>
        <name>carbamoyl phosphate</name>
        <dbReference type="ChEBI" id="CHEBI:58228"/>
    </ligand>
</feature>
<protein>
    <recommendedName>
        <fullName evidence="1">Aspartate carbamoyltransferase catalytic subunit</fullName>
        <ecNumber evidence="1">2.1.3.2</ecNumber>
    </recommendedName>
    <alternativeName>
        <fullName evidence="1">Aspartate transcarbamylase</fullName>
        <shortName evidence="1">ATCase</shortName>
    </alternativeName>
</protein>
<reference key="1">
    <citation type="submission" date="2008-10" db="EMBL/GenBank/DDBJ databases">
        <title>Genome sequence of Bacillus cereus AH187.</title>
        <authorList>
            <person name="Dodson R.J."/>
            <person name="Durkin A.S."/>
            <person name="Rosovitz M.J."/>
            <person name="Rasko D.A."/>
            <person name="Kolsto A.B."/>
            <person name="Okstad O.A."/>
            <person name="Ravel J."/>
            <person name="Sutton G."/>
        </authorList>
    </citation>
    <scope>NUCLEOTIDE SEQUENCE [LARGE SCALE GENOMIC DNA]</scope>
    <source>
        <strain>AH187</strain>
    </source>
</reference>
<keyword id="KW-0665">Pyrimidine biosynthesis</keyword>
<keyword id="KW-0808">Transferase</keyword>
<name>PYRB_BACC7</name>
<proteinExistence type="inferred from homology"/>
<gene>
    <name evidence="1" type="primary">pyrB</name>
    <name type="ordered locus">BCAH187_A3938</name>
</gene>
<dbReference type="EC" id="2.1.3.2" evidence="1"/>
<dbReference type="EMBL" id="CP001177">
    <property type="protein sequence ID" value="ACJ81784.1"/>
    <property type="molecule type" value="Genomic_DNA"/>
</dbReference>
<dbReference type="SMR" id="B7HLM3"/>
<dbReference type="KEGG" id="bcr:BCAH187_A3938"/>
<dbReference type="HOGENOM" id="CLU_043846_2_1_9"/>
<dbReference type="UniPathway" id="UPA00070">
    <property type="reaction ID" value="UER00116"/>
</dbReference>
<dbReference type="Proteomes" id="UP000002214">
    <property type="component" value="Chromosome"/>
</dbReference>
<dbReference type="GO" id="GO:0005829">
    <property type="term" value="C:cytosol"/>
    <property type="evidence" value="ECO:0007669"/>
    <property type="project" value="TreeGrafter"/>
</dbReference>
<dbReference type="GO" id="GO:0016597">
    <property type="term" value="F:amino acid binding"/>
    <property type="evidence" value="ECO:0007669"/>
    <property type="project" value="InterPro"/>
</dbReference>
<dbReference type="GO" id="GO:0004070">
    <property type="term" value="F:aspartate carbamoyltransferase activity"/>
    <property type="evidence" value="ECO:0007669"/>
    <property type="project" value="UniProtKB-UniRule"/>
</dbReference>
<dbReference type="GO" id="GO:0006207">
    <property type="term" value="P:'de novo' pyrimidine nucleobase biosynthetic process"/>
    <property type="evidence" value="ECO:0007669"/>
    <property type="project" value="InterPro"/>
</dbReference>
<dbReference type="GO" id="GO:0044205">
    <property type="term" value="P:'de novo' UMP biosynthetic process"/>
    <property type="evidence" value="ECO:0007669"/>
    <property type="project" value="UniProtKB-UniRule"/>
</dbReference>
<dbReference type="GO" id="GO:0006520">
    <property type="term" value="P:amino acid metabolic process"/>
    <property type="evidence" value="ECO:0007669"/>
    <property type="project" value="InterPro"/>
</dbReference>
<dbReference type="FunFam" id="3.40.50.1370:FF:000001">
    <property type="entry name" value="Aspartate carbamoyltransferase"/>
    <property type="match status" value="1"/>
</dbReference>
<dbReference type="FunFam" id="3.40.50.1370:FF:000011">
    <property type="entry name" value="Aspartate carbamoyltransferase"/>
    <property type="match status" value="1"/>
</dbReference>
<dbReference type="Gene3D" id="3.40.50.1370">
    <property type="entry name" value="Aspartate/ornithine carbamoyltransferase"/>
    <property type="match status" value="2"/>
</dbReference>
<dbReference type="HAMAP" id="MF_00001">
    <property type="entry name" value="Asp_carb_tr"/>
    <property type="match status" value="1"/>
</dbReference>
<dbReference type="InterPro" id="IPR006132">
    <property type="entry name" value="Asp/Orn_carbamoyltranf_P-bd"/>
</dbReference>
<dbReference type="InterPro" id="IPR006130">
    <property type="entry name" value="Asp/Orn_carbamoylTrfase"/>
</dbReference>
<dbReference type="InterPro" id="IPR036901">
    <property type="entry name" value="Asp/Orn_carbamoylTrfase_sf"/>
</dbReference>
<dbReference type="InterPro" id="IPR002082">
    <property type="entry name" value="Asp_carbamoyltransf"/>
</dbReference>
<dbReference type="InterPro" id="IPR006131">
    <property type="entry name" value="Asp_carbamoyltransf_Asp/Orn-bd"/>
</dbReference>
<dbReference type="NCBIfam" id="TIGR00670">
    <property type="entry name" value="asp_carb_tr"/>
    <property type="match status" value="1"/>
</dbReference>
<dbReference type="NCBIfam" id="NF002032">
    <property type="entry name" value="PRK00856.1"/>
    <property type="match status" value="1"/>
</dbReference>
<dbReference type="PANTHER" id="PTHR45753:SF6">
    <property type="entry name" value="ASPARTATE CARBAMOYLTRANSFERASE"/>
    <property type="match status" value="1"/>
</dbReference>
<dbReference type="PANTHER" id="PTHR45753">
    <property type="entry name" value="ORNITHINE CARBAMOYLTRANSFERASE, MITOCHONDRIAL"/>
    <property type="match status" value="1"/>
</dbReference>
<dbReference type="Pfam" id="PF00185">
    <property type="entry name" value="OTCace"/>
    <property type="match status" value="1"/>
</dbReference>
<dbReference type="Pfam" id="PF02729">
    <property type="entry name" value="OTCace_N"/>
    <property type="match status" value="1"/>
</dbReference>
<dbReference type="PRINTS" id="PR00100">
    <property type="entry name" value="AOTCASE"/>
</dbReference>
<dbReference type="PRINTS" id="PR00101">
    <property type="entry name" value="ATCASE"/>
</dbReference>
<dbReference type="SUPFAM" id="SSF53671">
    <property type="entry name" value="Aspartate/ornithine carbamoyltransferase"/>
    <property type="match status" value="1"/>
</dbReference>
<dbReference type="PROSITE" id="PS00097">
    <property type="entry name" value="CARBAMOYLTRANSFERASE"/>
    <property type="match status" value="1"/>
</dbReference>
<comment type="function">
    <text evidence="1">Catalyzes the condensation of carbamoyl phosphate and aspartate to form carbamoyl aspartate and inorganic phosphate, the committed step in the de novo pyrimidine nucleotide biosynthesis pathway.</text>
</comment>
<comment type="catalytic activity">
    <reaction evidence="1">
        <text>carbamoyl phosphate + L-aspartate = N-carbamoyl-L-aspartate + phosphate + H(+)</text>
        <dbReference type="Rhea" id="RHEA:20013"/>
        <dbReference type="ChEBI" id="CHEBI:15378"/>
        <dbReference type="ChEBI" id="CHEBI:29991"/>
        <dbReference type="ChEBI" id="CHEBI:32814"/>
        <dbReference type="ChEBI" id="CHEBI:43474"/>
        <dbReference type="ChEBI" id="CHEBI:58228"/>
        <dbReference type="EC" id="2.1.3.2"/>
    </reaction>
</comment>
<comment type="pathway">
    <text evidence="1">Pyrimidine metabolism; UMP biosynthesis via de novo pathway; (S)-dihydroorotate from bicarbonate: step 2/3.</text>
</comment>
<comment type="subunit">
    <text evidence="1">Heterododecamer (2C3:3R2) of six catalytic PyrB chains organized as two trimers (C3), and six regulatory PyrI chains organized as three dimers (R2).</text>
</comment>
<comment type="similarity">
    <text evidence="1">Belongs to the aspartate/ornithine carbamoyltransferase superfamily. ATCase family.</text>
</comment>